<proteinExistence type="inferred from homology"/>
<comment type="function">
    <text evidence="1">Reversibly catalyzes the transfer of the carbamoyl group from carbamoyl phosphate (CP) to the N(epsilon) atom of ornithine (ORN) to produce L-citrulline.</text>
</comment>
<comment type="catalytic activity">
    <reaction evidence="2">
        <text>carbamoyl phosphate + L-ornithine = L-citrulline + phosphate + H(+)</text>
        <dbReference type="Rhea" id="RHEA:19513"/>
        <dbReference type="ChEBI" id="CHEBI:15378"/>
        <dbReference type="ChEBI" id="CHEBI:43474"/>
        <dbReference type="ChEBI" id="CHEBI:46911"/>
        <dbReference type="ChEBI" id="CHEBI:57743"/>
        <dbReference type="ChEBI" id="CHEBI:58228"/>
        <dbReference type="EC" id="2.1.3.3"/>
    </reaction>
</comment>
<comment type="pathway">
    <text evidence="2">Amino-acid biosynthesis; L-arginine biosynthesis; L-arginine from L-ornithine and carbamoyl phosphate: step 1/3.</text>
</comment>
<comment type="subcellular location">
    <subcellularLocation>
        <location evidence="2">Cytoplasm</location>
    </subcellularLocation>
</comment>
<comment type="similarity">
    <text evidence="2">Belongs to the aspartate/ornithine carbamoyltransferase superfamily. OTCase family.</text>
</comment>
<organism>
    <name type="scientific">Methanococcus aeolicus (strain ATCC BAA-1280 / DSM 17508 / OCM 812 / Nankai-3)</name>
    <dbReference type="NCBI Taxonomy" id="419665"/>
    <lineage>
        <taxon>Archaea</taxon>
        <taxon>Methanobacteriati</taxon>
        <taxon>Methanobacteriota</taxon>
        <taxon>Methanomada group</taxon>
        <taxon>Methanococci</taxon>
        <taxon>Methanococcales</taxon>
        <taxon>Methanococcaceae</taxon>
        <taxon>Methanococcus</taxon>
    </lineage>
</organism>
<dbReference type="EC" id="2.1.3.3" evidence="2"/>
<dbReference type="EMBL" id="CP000743">
    <property type="protein sequence ID" value="ABR55941.1"/>
    <property type="molecule type" value="Genomic_DNA"/>
</dbReference>
<dbReference type="RefSeq" id="WP_011973073.1">
    <property type="nucleotide sequence ID" value="NC_009635.1"/>
</dbReference>
<dbReference type="SMR" id="A6UTW9"/>
<dbReference type="STRING" id="419665.Maeo_0354"/>
<dbReference type="GeneID" id="5327412"/>
<dbReference type="KEGG" id="mae:Maeo_0354"/>
<dbReference type="eggNOG" id="arCOG00912">
    <property type="taxonomic scope" value="Archaea"/>
</dbReference>
<dbReference type="HOGENOM" id="CLU_043846_3_2_2"/>
<dbReference type="OrthoDB" id="4696at2157"/>
<dbReference type="UniPathway" id="UPA00068">
    <property type="reaction ID" value="UER00112"/>
</dbReference>
<dbReference type="Proteomes" id="UP000001106">
    <property type="component" value="Chromosome"/>
</dbReference>
<dbReference type="GO" id="GO:0005737">
    <property type="term" value="C:cytoplasm"/>
    <property type="evidence" value="ECO:0007669"/>
    <property type="project" value="UniProtKB-SubCell"/>
</dbReference>
<dbReference type="GO" id="GO:0016597">
    <property type="term" value="F:amino acid binding"/>
    <property type="evidence" value="ECO:0007669"/>
    <property type="project" value="InterPro"/>
</dbReference>
<dbReference type="GO" id="GO:0004585">
    <property type="term" value="F:ornithine carbamoyltransferase activity"/>
    <property type="evidence" value="ECO:0007669"/>
    <property type="project" value="UniProtKB-UniRule"/>
</dbReference>
<dbReference type="GO" id="GO:0042450">
    <property type="term" value="P:arginine biosynthetic process via ornithine"/>
    <property type="evidence" value="ECO:0007669"/>
    <property type="project" value="TreeGrafter"/>
</dbReference>
<dbReference type="GO" id="GO:0019240">
    <property type="term" value="P:citrulline biosynthetic process"/>
    <property type="evidence" value="ECO:0007669"/>
    <property type="project" value="TreeGrafter"/>
</dbReference>
<dbReference type="GO" id="GO:0006526">
    <property type="term" value="P:L-arginine biosynthetic process"/>
    <property type="evidence" value="ECO:0007669"/>
    <property type="project" value="UniProtKB-UniRule"/>
</dbReference>
<dbReference type="FunFam" id="3.40.50.1370:FF:000008">
    <property type="entry name" value="Ornithine carbamoyltransferase"/>
    <property type="match status" value="1"/>
</dbReference>
<dbReference type="Gene3D" id="3.40.50.1370">
    <property type="entry name" value="Aspartate/ornithine carbamoyltransferase"/>
    <property type="match status" value="2"/>
</dbReference>
<dbReference type="HAMAP" id="MF_01109">
    <property type="entry name" value="OTCase"/>
    <property type="match status" value="1"/>
</dbReference>
<dbReference type="InterPro" id="IPR006132">
    <property type="entry name" value="Asp/Orn_carbamoyltranf_P-bd"/>
</dbReference>
<dbReference type="InterPro" id="IPR006130">
    <property type="entry name" value="Asp/Orn_carbamoylTrfase"/>
</dbReference>
<dbReference type="InterPro" id="IPR036901">
    <property type="entry name" value="Asp/Orn_carbamoylTrfase_sf"/>
</dbReference>
<dbReference type="InterPro" id="IPR006131">
    <property type="entry name" value="Asp_carbamoyltransf_Asp/Orn-bd"/>
</dbReference>
<dbReference type="InterPro" id="IPR002292">
    <property type="entry name" value="Orn/put_carbamltrans"/>
</dbReference>
<dbReference type="InterPro" id="IPR024904">
    <property type="entry name" value="OTCase_ArgI"/>
</dbReference>
<dbReference type="NCBIfam" id="TIGR00658">
    <property type="entry name" value="orni_carb_tr"/>
    <property type="match status" value="1"/>
</dbReference>
<dbReference type="NCBIfam" id="NF001986">
    <property type="entry name" value="PRK00779.1"/>
    <property type="match status" value="1"/>
</dbReference>
<dbReference type="PANTHER" id="PTHR45753">
    <property type="entry name" value="ORNITHINE CARBAMOYLTRANSFERASE, MITOCHONDRIAL"/>
    <property type="match status" value="1"/>
</dbReference>
<dbReference type="PANTHER" id="PTHR45753:SF3">
    <property type="entry name" value="ORNITHINE TRANSCARBAMYLASE, MITOCHONDRIAL"/>
    <property type="match status" value="1"/>
</dbReference>
<dbReference type="Pfam" id="PF00185">
    <property type="entry name" value="OTCace"/>
    <property type="match status" value="1"/>
</dbReference>
<dbReference type="Pfam" id="PF02729">
    <property type="entry name" value="OTCace_N"/>
    <property type="match status" value="1"/>
</dbReference>
<dbReference type="PRINTS" id="PR00100">
    <property type="entry name" value="AOTCASE"/>
</dbReference>
<dbReference type="PRINTS" id="PR00102">
    <property type="entry name" value="OTCASE"/>
</dbReference>
<dbReference type="SUPFAM" id="SSF53671">
    <property type="entry name" value="Aspartate/ornithine carbamoyltransferase"/>
    <property type="match status" value="1"/>
</dbReference>
<sequence>MHLLTLENLERKDIENILNDAIYFKKNRKSENILKEKTVALIFESPSTRTRISFDIAVNELGGHSLTLNTGETHVSKKESTKDTAKVLSRFVDVIVARVKEHSTLEDFTKYGNVPVINALSDLSHPCQILADLLTIKEHKNKLSGLKFAYFGDGNNVCNSLILGCAIMGMDIFVATPEGYEPNEKFVKMAQQIIDKQGEGSITITDDAIICAKDADVLYTDVWVSMSDKNKNIDEVLKIFPPYQINEKLLSYAKKDAIVMHCLPANRGMEITDEVIDGEQSVVYDEAENRLHAQKAVFKYIFSK</sequence>
<reference key="1">
    <citation type="submission" date="2007-06" db="EMBL/GenBank/DDBJ databases">
        <title>Complete sequence of Methanococcus aeolicus Nankai-3.</title>
        <authorList>
            <consortium name="US DOE Joint Genome Institute"/>
            <person name="Copeland A."/>
            <person name="Lucas S."/>
            <person name="Lapidus A."/>
            <person name="Barry K."/>
            <person name="Glavina del Rio T."/>
            <person name="Dalin E."/>
            <person name="Tice H."/>
            <person name="Pitluck S."/>
            <person name="Chain P."/>
            <person name="Malfatti S."/>
            <person name="Shin M."/>
            <person name="Vergez L."/>
            <person name="Schmutz J."/>
            <person name="Larimer F."/>
            <person name="Land M."/>
            <person name="Hauser L."/>
            <person name="Kyrpides N."/>
            <person name="Lykidis A."/>
            <person name="Sieprawska-Lupa M."/>
            <person name="Whitman W.B."/>
            <person name="Richardson P."/>
        </authorList>
    </citation>
    <scope>NUCLEOTIDE SEQUENCE [LARGE SCALE GENOMIC DNA]</scope>
    <source>
        <strain>ATCC BAA-1280 / DSM 17508 / OCM 812 / Nankai-3</strain>
    </source>
</reference>
<feature type="chain" id="PRO_1000084847" description="Ornithine carbamoyltransferase">
    <location>
        <begin position="1"/>
        <end position="304"/>
    </location>
</feature>
<feature type="binding site" evidence="2">
    <location>
        <begin position="47"/>
        <end position="50"/>
    </location>
    <ligand>
        <name>carbamoyl phosphate</name>
        <dbReference type="ChEBI" id="CHEBI:58228"/>
    </ligand>
</feature>
<feature type="binding site" evidence="2">
    <location>
        <position position="98"/>
    </location>
    <ligand>
        <name>carbamoyl phosphate</name>
        <dbReference type="ChEBI" id="CHEBI:58228"/>
    </ligand>
</feature>
<feature type="binding site" evidence="2">
    <location>
        <begin position="125"/>
        <end position="128"/>
    </location>
    <ligand>
        <name>carbamoyl phosphate</name>
        <dbReference type="ChEBI" id="CHEBI:58228"/>
    </ligand>
</feature>
<feature type="binding site" evidence="2">
    <location>
        <position position="156"/>
    </location>
    <ligand>
        <name>L-ornithine</name>
        <dbReference type="ChEBI" id="CHEBI:46911"/>
    </ligand>
</feature>
<feature type="binding site" evidence="2">
    <location>
        <position position="221"/>
    </location>
    <ligand>
        <name>L-ornithine</name>
        <dbReference type="ChEBI" id="CHEBI:46911"/>
    </ligand>
</feature>
<feature type="binding site" evidence="2">
    <location>
        <begin position="225"/>
        <end position="226"/>
    </location>
    <ligand>
        <name>L-ornithine</name>
        <dbReference type="ChEBI" id="CHEBI:46911"/>
    </ligand>
</feature>
<feature type="binding site" evidence="2">
    <location>
        <begin position="262"/>
        <end position="263"/>
    </location>
    <ligand>
        <name>carbamoyl phosphate</name>
        <dbReference type="ChEBI" id="CHEBI:58228"/>
    </ligand>
</feature>
<feature type="binding site" evidence="2">
    <location>
        <position position="290"/>
    </location>
    <ligand>
        <name>carbamoyl phosphate</name>
        <dbReference type="ChEBI" id="CHEBI:58228"/>
    </ligand>
</feature>
<gene>
    <name evidence="2" type="primary">argF</name>
    <name type="ordered locus">Maeo_0354</name>
</gene>
<evidence type="ECO:0000250" key="1"/>
<evidence type="ECO:0000255" key="2">
    <source>
        <dbReference type="HAMAP-Rule" id="MF_01109"/>
    </source>
</evidence>
<keyword id="KW-0028">Amino-acid biosynthesis</keyword>
<keyword id="KW-0055">Arginine biosynthesis</keyword>
<keyword id="KW-0963">Cytoplasm</keyword>
<keyword id="KW-0808">Transferase</keyword>
<accession>A6UTW9</accession>
<name>OTC_META3</name>
<protein>
    <recommendedName>
        <fullName evidence="2">Ornithine carbamoyltransferase</fullName>
        <shortName evidence="2">OTCase</shortName>
        <ecNumber evidence="2">2.1.3.3</ecNumber>
    </recommendedName>
</protein>